<reference key="1">
    <citation type="journal article" date="2002" name="Nucleic Acids Res.">
        <title>Genome sequence of Shigella flexneri 2a: insights into pathogenicity through comparison with genomes of Escherichia coli K12 and O157.</title>
        <authorList>
            <person name="Jin Q."/>
            <person name="Yuan Z."/>
            <person name="Xu J."/>
            <person name="Wang Y."/>
            <person name="Shen Y."/>
            <person name="Lu W."/>
            <person name="Wang J."/>
            <person name="Liu H."/>
            <person name="Yang J."/>
            <person name="Yang F."/>
            <person name="Zhang X."/>
            <person name="Zhang J."/>
            <person name="Yang G."/>
            <person name="Wu H."/>
            <person name="Qu D."/>
            <person name="Dong J."/>
            <person name="Sun L."/>
            <person name="Xue Y."/>
            <person name="Zhao A."/>
            <person name="Gao Y."/>
            <person name="Zhu J."/>
            <person name="Kan B."/>
            <person name="Ding K."/>
            <person name="Chen S."/>
            <person name="Cheng H."/>
            <person name="Yao Z."/>
            <person name="He B."/>
            <person name="Chen R."/>
            <person name="Ma D."/>
            <person name="Qiang B."/>
            <person name="Wen Y."/>
            <person name="Hou Y."/>
            <person name="Yu J."/>
        </authorList>
    </citation>
    <scope>NUCLEOTIDE SEQUENCE [LARGE SCALE GENOMIC DNA]</scope>
    <source>
        <strain>301 / Serotype 2a</strain>
    </source>
</reference>
<reference key="2">
    <citation type="journal article" date="2003" name="Infect. Immun.">
        <title>Complete genome sequence and comparative genomics of Shigella flexneri serotype 2a strain 2457T.</title>
        <authorList>
            <person name="Wei J."/>
            <person name="Goldberg M.B."/>
            <person name="Burland V."/>
            <person name="Venkatesan M.M."/>
            <person name="Deng W."/>
            <person name="Fournier G."/>
            <person name="Mayhew G.F."/>
            <person name="Plunkett G. III"/>
            <person name="Rose D.J."/>
            <person name="Darling A."/>
            <person name="Mau B."/>
            <person name="Perna N.T."/>
            <person name="Payne S.M."/>
            <person name="Runyen-Janecky L.J."/>
            <person name="Zhou S."/>
            <person name="Schwartz D.C."/>
            <person name="Blattner F.R."/>
        </authorList>
    </citation>
    <scope>NUCLEOTIDE SEQUENCE [LARGE SCALE GENOMIC DNA]</scope>
    <source>
        <strain>ATCC 700930 / 2457T / Serotype 2a</strain>
    </source>
</reference>
<protein>
    <recommendedName>
        <fullName evidence="1">tRNA-cytidine(32) 2-sulfurtransferase</fullName>
        <ecNumber evidence="1">2.8.1.-</ecNumber>
    </recommendedName>
    <alternativeName>
        <fullName evidence="1">Two-thiocytidine biosynthesis protein A</fullName>
    </alternativeName>
    <alternativeName>
        <fullName evidence="1">tRNA 2-thiocytidine biosynthesis protein TtcA</fullName>
    </alternativeName>
</protein>
<name>TTCA_SHIFL</name>
<proteinExistence type="inferred from homology"/>
<comment type="function">
    <text evidence="1">Catalyzes the ATP-dependent 2-thiolation of cytidine in position 32 of tRNA, to form 2-thiocytidine (s(2)C32). The sulfur atoms are provided by the cysteine/cysteine desulfurase (IscS) system.</text>
</comment>
<comment type="catalytic activity">
    <reaction evidence="1">
        <text>cytidine(32) in tRNA + S-sulfanyl-L-cysteinyl-[cysteine desulfurase] + AH2 + ATP = 2-thiocytidine(32) in tRNA + L-cysteinyl-[cysteine desulfurase] + A + AMP + diphosphate + H(+)</text>
        <dbReference type="Rhea" id="RHEA:57048"/>
        <dbReference type="Rhea" id="RHEA-COMP:10288"/>
        <dbReference type="Rhea" id="RHEA-COMP:12157"/>
        <dbReference type="Rhea" id="RHEA-COMP:12158"/>
        <dbReference type="Rhea" id="RHEA-COMP:14821"/>
        <dbReference type="ChEBI" id="CHEBI:13193"/>
        <dbReference type="ChEBI" id="CHEBI:15378"/>
        <dbReference type="ChEBI" id="CHEBI:17499"/>
        <dbReference type="ChEBI" id="CHEBI:29950"/>
        <dbReference type="ChEBI" id="CHEBI:30616"/>
        <dbReference type="ChEBI" id="CHEBI:33019"/>
        <dbReference type="ChEBI" id="CHEBI:61963"/>
        <dbReference type="ChEBI" id="CHEBI:82748"/>
        <dbReference type="ChEBI" id="CHEBI:141453"/>
        <dbReference type="ChEBI" id="CHEBI:456215"/>
    </reaction>
    <physiologicalReaction direction="left-to-right" evidence="1">
        <dbReference type="Rhea" id="RHEA:57049"/>
    </physiologicalReaction>
</comment>
<comment type="cofactor">
    <cofactor evidence="1">
        <name>Mg(2+)</name>
        <dbReference type="ChEBI" id="CHEBI:18420"/>
    </cofactor>
</comment>
<comment type="cofactor">
    <cofactor evidence="1">
        <name>[4Fe-4S] cluster</name>
        <dbReference type="ChEBI" id="CHEBI:49883"/>
    </cofactor>
    <text evidence="1">Binds 1 [4Fe-4S] cluster per subunit. The cluster is chelated by three Cys residues, the fourth Fe has a free coordination site that may bind a sulfur atom transferred from the persulfide of IscS.</text>
</comment>
<comment type="pathway">
    <text evidence="1">tRNA modification.</text>
</comment>
<comment type="subunit">
    <text evidence="1">Homodimer.</text>
</comment>
<comment type="subcellular location">
    <subcellularLocation>
        <location evidence="1">Cytoplasm</location>
    </subcellularLocation>
</comment>
<comment type="miscellaneous">
    <text evidence="1">The thiolation reaction likely consists of two steps: a first activation step by ATP to form an adenylated intermediate of the target base of tRNA, and a second nucleophilic substitution step of the sulfur (S) atom supplied by the hydrosulfide attached to the Fe-S cluster.</text>
</comment>
<comment type="similarity">
    <text evidence="1">Belongs to the TtcA family.</text>
</comment>
<feature type="chain" id="PRO_0000348851" description="tRNA-cytidine(32) 2-sulfurtransferase">
    <location>
        <begin position="1"/>
        <end position="311"/>
    </location>
</feature>
<feature type="short sequence motif" description="PP-loop motif" evidence="1">
    <location>
        <begin position="47"/>
        <end position="52"/>
    </location>
</feature>
<feature type="binding site" evidence="1">
    <location>
        <position position="122"/>
    </location>
    <ligand>
        <name>[4Fe-4S] cluster</name>
        <dbReference type="ChEBI" id="CHEBI:49883"/>
    </ligand>
</feature>
<feature type="binding site" evidence="1">
    <location>
        <position position="125"/>
    </location>
    <ligand>
        <name>[4Fe-4S] cluster</name>
        <dbReference type="ChEBI" id="CHEBI:49883"/>
    </ligand>
</feature>
<feature type="binding site" evidence="1">
    <location>
        <position position="213"/>
    </location>
    <ligand>
        <name>[4Fe-4S] cluster</name>
        <dbReference type="ChEBI" id="CHEBI:49883"/>
    </ligand>
</feature>
<evidence type="ECO:0000255" key="1">
    <source>
        <dbReference type="HAMAP-Rule" id="MF_01850"/>
    </source>
</evidence>
<organism>
    <name type="scientific">Shigella flexneri</name>
    <dbReference type="NCBI Taxonomy" id="623"/>
    <lineage>
        <taxon>Bacteria</taxon>
        <taxon>Pseudomonadati</taxon>
        <taxon>Pseudomonadota</taxon>
        <taxon>Gammaproteobacteria</taxon>
        <taxon>Enterobacterales</taxon>
        <taxon>Enterobacteriaceae</taxon>
        <taxon>Shigella</taxon>
    </lineage>
</organism>
<gene>
    <name evidence="1" type="primary">ttcA</name>
    <name type="ordered locus">SF1825</name>
    <name type="ordered locus">S1448</name>
</gene>
<dbReference type="EC" id="2.8.1.-" evidence="1"/>
<dbReference type="EMBL" id="AE005674">
    <property type="protein sequence ID" value="AAN43390.1"/>
    <property type="molecule type" value="Genomic_DNA"/>
</dbReference>
<dbReference type="EMBL" id="AE014073">
    <property type="protein sequence ID" value="AAP16845.1"/>
    <property type="molecule type" value="Genomic_DNA"/>
</dbReference>
<dbReference type="RefSeq" id="WP_000081423.1">
    <property type="nucleotide sequence ID" value="NZ_WPGW01000091.1"/>
</dbReference>
<dbReference type="SMR" id="Q83KS7"/>
<dbReference type="STRING" id="198214.SF1825"/>
<dbReference type="PaxDb" id="198214-SF1825"/>
<dbReference type="KEGG" id="sfl:SF1825"/>
<dbReference type="KEGG" id="sfx:S1448"/>
<dbReference type="PATRIC" id="fig|198214.7.peg.2167"/>
<dbReference type="HOGENOM" id="CLU_026481_0_0_6"/>
<dbReference type="Proteomes" id="UP000001006">
    <property type="component" value="Chromosome"/>
</dbReference>
<dbReference type="Proteomes" id="UP000002673">
    <property type="component" value="Chromosome"/>
</dbReference>
<dbReference type="GO" id="GO:0005737">
    <property type="term" value="C:cytoplasm"/>
    <property type="evidence" value="ECO:0007669"/>
    <property type="project" value="UniProtKB-SubCell"/>
</dbReference>
<dbReference type="GO" id="GO:0051539">
    <property type="term" value="F:4 iron, 4 sulfur cluster binding"/>
    <property type="evidence" value="ECO:0007669"/>
    <property type="project" value="UniProtKB-UniRule"/>
</dbReference>
<dbReference type="GO" id="GO:0005524">
    <property type="term" value="F:ATP binding"/>
    <property type="evidence" value="ECO:0007669"/>
    <property type="project" value="UniProtKB-UniRule"/>
</dbReference>
<dbReference type="GO" id="GO:0000287">
    <property type="term" value="F:magnesium ion binding"/>
    <property type="evidence" value="ECO:0007669"/>
    <property type="project" value="UniProtKB-UniRule"/>
</dbReference>
<dbReference type="GO" id="GO:0016783">
    <property type="term" value="F:sulfurtransferase activity"/>
    <property type="evidence" value="ECO:0007669"/>
    <property type="project" value="UniProtKB-UniRule"/>
</dbReference>
<dbReference type="GO" id="GO:0000049">
    <property type="term" value="F:tRNA binding"/>
    <property type="evidence" value="ECO:0007669"/>
    <property type="project" value="UniProtKB-KW"/>
</dbReference>
<dbReference type="GO" id="GO:0034227">
    <property type="term" value="P:tRNA thio-modification"/>
    <property type="evidence" value="ECO:0007669"/>
    <property type="project" value="UniProtKB-UniRule"/>
</dbReference>
<dbReference type="CDD" id="cd24138">
    <property type="entry name" value="TtcA-like"/>
    <property type="match status" value="1"/>
</dbReference>
<dbReference type="FunFam" id="3.40.50.620:FF:000046">
    <property type="entry name" value="tRNA-cytidine(32) 2-sulfurtransferase"/>
    <property type="match status" value="1"/>
</dbReference>
<dbReference type="Gene3D" id="3.40.50.620">
    <property type="entry name" value="HUPs"/>
    <property type="match status" value="1"/>
</dbReference>
<dbReference type="HAMAP" id="MF_01850">
    <property type="entry name" value="TtcA"/>
    <property type="match status" value="1"/>
</dbReference>
<dbReference type="InterPro" id="IPR014729">
    <property type="entry name" value="Rossmann-like_a/b/a_fold"/>
</dbReference>
<dbReference type="InterPro" id="IPR011063">
    <property type="entry name" value="TilS/TtcA_N"/>
</dbReference>
<dbReference type="InterPro" id="IPR012089">
    <property type="entry name" value="tRNA_Cyd_32_2_STrfase"/>
</dbReference>
<dbReference type="InterPro" id="IPR035107">
    <property type="entry name" value="tRNA_thiolation_TtcA_Ctu1"/>
</dbReference>
<dbReference type="NCBIfam" id="NF007972">
    <property type="entry name" value="PRK10696.1"/>
    <property type="match status" value="1"/>
</dbReference>
<dbReference type="PANTHER" id="PTHR43686:SF1">
    <property type="entry name" value="AMINOTRAN_5 DOMAIN-CONTAINING PROTEIN"/>
    <property type="match status" value="1"/>
</dbReference>
<dbReference type="PANTHER" id="PTHR43686">
    <property type="entry name" value="SULFURTRANSFERASE-RELATED"/>
    <property type="match status" value="1"/>
</dbReference>
<dbReference type="Pfam" id="PF01171">
    <property type="entry name" value="ATP_bind_3"/>
    <property type="match status" value="1"/>
</dbReference>
<dbReference type="PIRSF" id="PIRSF004976">
    <property type="entry name" value="ATPase_YdaO"/>
    <property type="match status" value="1"/>
</dbReference>
<dbReference type="SUPFAM" id="SSF52402">
    <property type="entry name" value="Adenine nucleotide alpha hydrolases-like"/>
    <property type="match status" value="1"/>
</dbReference>
<sequence>MSQNQEISKKEQYNLNKLQKRLRRNVGEAIADFNMIEEGDRIMVCLSGGKDSYTMLEILRNLQQSAPINFSLVAVNLDQKQPGFPEHVLPEYLEKLGVEYKIVEENTYGIVKEKIPEGKTTCSLCSRLRRGILYRTATELGTTKIALGHHRDDILQTLFLNMFYGGKMKGMPPKLMSDDGKHIVIRPLAYCREKDIQRFADAKAFPIIPCNLCGSQPNLQRQVIADMLRDWDKRYPGRIETMFSAMQNVVPSHLCDTNLFDFKGITHGSEVVNGGDLAFDREEIPLQPAGWQPEEDENQLDELRLNVVEVK</sequence>
<accession>Q83KS7</accession>
<accession>Q7C1U4</accession>
<keyword id="KW-0004">4Fe-4S</keyword>
<keyword id="KW-0067">ATP-binding</keyword>
<keyword id="KW-0963">Cytoplasm</keyword>
<keyword id="KW-0408">Iron</keyword>
<keyword id="KW-0411">Iron-sulfur</keyword>
<keyword id="KW-0460">Magnesium</keyword>
<keyword id="KW-0479">Metal-binding</keyword>
<keyword id="KW-0547">Nucleotide-binding</keyword>
<keyword id="KW-1185">Reference proteome</keyword>
<keyword id="KW-0694">RNA-binding</keyword>
<keyword id="KW-0808">Transferase</keyword>
<keyword id="KW-0819">tRNA processing</keyword>
<keyword id="KW-0820">tRNA-binding</keyword>